<feature type="chain" id="PRO_0000092466" description="Lipoprotein-releasing system ATP-binding protein LolD">
    <location>
        <begin position="1"/>
        <end position="227"/>
    </location>
</feature>
<feature type="domain" description="ABC transporter" evidence="1">
    <location>
        <begin position="5"/>
        <end position="227"/>
    </location>
</feature>
<feature type="binding site" evidence="1">
    <location>
        <begin position="41"/>
        <end position="48"/>
    </location>
    <ligand>
        <name>ATP</name>
        <dbReference type="ChEBI" id="CHEBI:30616"/>
    </ligand>
</feature>
<name>LOLD_VIBVY</name>
<evidence type="ECO:0000255" key="1">
    <source>
        <dbReference type="HAMAP-Rule" id="MF_01708"/>
    </source>
</evidence>
<evidence type="ECO:0000305" key="2"/>
<protein>
    <recommendedName>
        <fullName evidence="1">Lipoprotein-releasing system ATP-binding protein LolD</fullName>
        <ecNumber evidence="1">7.6.2.-</ecNumber>
    </recommendedName>
</protein>
<organism>
    <name type="scientific">Vibrio vulnificus (strain YJ016)</name>
    <dbReference type="NCBI Taxonomy" id="196600"/>
    <lineage>
        <taxon>Bacteria</taxon>
        <taxon>Pseudomonadati</taxon>
        <taxon>Pseudomonadota</taxon>
        <taxon>Gammaproteobacteria</taxon>
        <taxon>Vibrionales</taxon>
        <taxon>Vibrionaceae</taxon>
        <taxon>Vibrio</taxon>
    </lineage>
</organism>
<comment type="function">
    <text evidence="1">Part of the ABC transporter complex LolCDE involved in the translocation of mature outer membrane-directed lipoproteins, from the inner membrane to the periplasmic chaperone, LolA. Responsible for the formation of the LolA-lipoprotein complex in an ATP-dependent manner.</text>
</comment>
<comment type="subunit">
    <text evidence="1">The complex is composed of two ATP-binding proteins (LolD) and two transmembrane proteins (LolC and LolE).</text>
</comment>
<comment type="subcellular location">
    <subcellularLocation>
        <location evidence="1">Cell inner membrane</location>
        <topology evidence="1">Peripheral membrane protein</topology>
    </subcellularLocation>
</comment>
<comment type="similarity">
    <text evidence="1">Belongs to the ABC transporter superfamily. Lipoprotein translocase (TC 3.A.1.125) family.</text>
</comment>
<comment type="sequence caution" evidence="2">
    <conflict type="erroneous initiation">
        <sequence resource="EMBL-CDS" id="BAC95126"/>
    </conflict>
</comment>
<accession>Q7MJ01</accession>
<proteinExistence type="inferred from homology"/>
<keyword id="KW-0067">ATP-binding</keyword>
<keyword id="KW-0997">Cell inner membrane</keyword>
<keyword id="KW-1003">Cell membrane</keyword>
<keyword id="KW-0472">Membrane</keyword>
<keyword id="KW-0547">Nucleotide-binding</keyword>
<keyword id="KW-1278">Translocase</keyword>
<keyword id="KW-0813">Transport</keyword>
<reference key="1">
    <citation type="journal article" date="2003" name="Genome Res.">
        <title>Comparative genome analysis of Vibrio vulnificus, a marine pathogen.</title>
        <authorList>
            <person name="Chen C.-Y."/>
            <person name="Wu K.-M."/>
            <person name="Chang Y.-C."/>
            <person name="Chang C.-H."/>
            <person name="Tsai H.-C."/>
            <person name="Liao T.-L."/>
            <person name="Liu Y.-M."/>
            <person name="Chen H.-J."/>
            <person name="Shen A.B.-T."/>
            <person name="Li J.-C."/>
            <person name="Su T.-L."/>
            <person name="Shao C.-P."/>
            <person name="Lee C.-T."/>
            <person name="Hor L.-I."/>
            <person name="Tsai S.-F."/>
        </authorList>
    </citation>
    <scope>NUCLEOTIDE SEQUENCE [LARGE SCALE GENOMIC DNA]</scope>
    <source>
        <strain>YJ016</strain>
    </source>
</reference>
<gene>
    <name evidence="1" type="primary">lolD</name>
    <name type="ordered locus">VV2362</name>
</gene>
<dbReference type="EC" id="7.6.2.-" evidence="1"/>
<dbReference type="EMBL" id="BA000037">
    <property type="protein sequence ID" value="BAC95126.1"/>
    <property type="status" value="ALT_INIT"/>
    <property type="molecule type" value="Genomic_DNA"/>
</dbReference>
<dbReference type="RefSeq" id="WP_011079967.1">
    <property type="nucleotide sequence ID" value="NC_005139.1"/>
</dbReference>
<dbReference type="SMR" id="Q7MJ01"/>
<dbReference type="STRING" id="672.VV93_v1c20700"/>
<dbReference type="KEGG" id="vvy:VV2362"/>
<dbReference type="eggNOG" id="COG1136">
    <property type="taxonomic scope" value="Bacteria"/>
</dbReference>
<dbReference type="HOGENOM" id="CLU_000604_1_22_6"/>
<dbReference type="Proteomes" id="UP000002675">
    <property type="component" value="Chromosome I"/>
</dbReference>
<dbReference type="GO" id="GO:0005886">
    <property type="term" value="C:plasma membrane"/>
    <property type="evidence" value="ECO:0007669"/>
    <property type="project" value="UniProtKB-SubCell"/>
</dbReference>
<dbReference type="GO" id="GO:0005524">
    <property type="term" value="F:ATP binding"/>
    <property type="evidence" value="ECO:0007669"/>
    <property type="project" value="UniProtKB-KW"/>
</dbReference>
<dbReference type="GO" id="GO:0016887">
    <property type="term" value="F:ATP hydrolysis activity"/>
    <property type="evidence" value="ECO:0007669"/>
    <property type="project" value="InterPro"/>
</dbReference>
<dbReference type="GO" id="GO:0044873">
    <property type="term" value="P:lipoprotein localization to membrane"/>
    <property type="evidence" value="ECO:0007669"/>
    <property type="project" value="InterPro"/>
</dbReference>
<dbReference type="CDD" id="cd03255">
    <property type="entry name" value="ABC_MJ0796_LolCDE_FtsE"/>
    <property type="match status" value="1"/>
</dbReference>
<dbReference type="FunFam" id="3.40.50.300:FF:000230">
    <property type="entry name" value="Lipoprotein-releasing system ATP-binding protein LolD"/>
    <property type="match status" value="1"/>
</dbReference>
<dbReference type="Gene3D" id="3.40.50.300">
    <property type="entry name" value="P-loop containing nucleotide triphosphate hydrolases"/>
    <property type="match status" value="1"/>
</dbReference>
<dbReference type="InterPro" id="IPR003593">
    <property type="entry name" value="AAA+_ATPase"/>
</dbReference>
<dbReference type="InterPro" id="IPR003439">
    <property type="entry name" value="ABC_transporter-like_ATP-bd"/>
</dbReference>
<dbReference type="InterPro" id="IPR017871">
    <property type="entry name" value="ABC_transporter-like_CS"/>
</dbReference>
<dbReference type="InterPro" id="IPR011924">
    <property type="entry name" value="LolD_lipo_ATP-bd"/>
</dbReference>
<dbReference type="InterPro" id="IPR017911">
    <property type="entry name" value="MacB-like_ATP-bd"/>
</dbReference>
<dbReference type="InterPro" id="IPR027417">
    <property type="entry name" value="P-loop_NTPase"/>
</dbReference>
<dbReference type="NCBIfam" id="TIGR02211">
    <property type="entry name" value="LolD_lipo_ex"/>
    <property type="match status" value="1"/>
</dbReference>
<dbReference type="PANTHER" id="PTHR42798:SF2">
    <property type="entry name" value="ABC TRANSPORTER ATP-BINDING PROTEIN MG467-RELATED"/>
    <property type="match status" value="1"/>
</dbReference>
<dbReference type="PANTHER" id="PTHR42798">
    <property type="entry name" value="LIPOPROTEIN-RELEASING SYSTEM ATP-BINDING PROTEIN LOLD"/>
    <property type="match status" value="1"/>
</dbReference>
<dbReference type="Pfam" id="PF00005">
    <property type="entry name" value="ABC_tran"/>
    <property type="match status" value="1"/>
</dbReference>
<dbReference type="SMART" id="SM00382">
    <property type="entry name" value="AAA"/>
    <property type="match status" value="1"/>
</dbReference>
<dbReference type="SUPFAM" id="SSF52540">
    <property type="entry name" value="P-loop containing nucleoside triphosphate hydrolases"/>
    <property type="match status" value="1"/>
</dbReference>
<dbReference type="PROSITE" id="PS00211">
    <property type="entry name" value="ABC_TRANSPORTER_1"/>
    <property type="match status" value="1"/>
</dbReference>
<dbReference type="PROSITE" id="PS50893">
    <property type="entry name" value="ABC_TRANSPORTER_2"/>
    <property type="match status" value="1"/>
</dbReference>
<dbReference type="PROSITE" id="PS51244">
    <property type="entry name" value="LOLD"/>
    <property type="match status" value="1"/>
</dbReference>
<sequence length="227" mass="25029">MNKLLQCHQVSKIYREGEFETEVLKGVDFELEQGELVAIVGTSGSGKSTLLHILGALDDATHGEVAFLDYQLSALSGNKQAQVRNQHLGFIYQFHHLLADFTAVENVAMPLLIGGKSPKQAKLAAEALLEKVGLQHRMHHRPSELSGGERQRVAIARALVNKPALVLADEPTGNLDHKTALQIYDLMRELNRESGTAFLVVTHDNELAAKMDRILYMQDGVLASDNR</sequence>